<evidence type="ECO:0000255" key="1">
    <source>
        <dbReference type="HAMAP-Rule" id="MF_00780"/>
    </source>
</evidence>
<reference key="1">
    <citation type="journal article" date="2009" name="J. Bacteriol.">
        <title>Genome sequence of Azotobacter vinelandii, an obligate aerobe specialized to support diverse anaerobic metabolic processes.</title>
        <authorList>
            <person name="Setubal J.C."/>
            <person name="Dos Santos P."/>
            <person name="Goldman B.S."/>
            <person name="Ertesvaag H."/>
            <person name="Espin G."/>
            <person name="Rubio L.M."/>
            <person name="Valla S."/>
            <person name="Almeida N.F."/>
            <person name="Balasubramanian D."/>
            <person name="Cromes L."/>
            <person name="Curatti L."/>
            <person name="Du Z."/>
            <person name="Godsy E."/>
            <person name="Goodner B."/>
            <person name="Hellner-Burris K."/>
            <person name="Hernandez J.A."/>
            <person name="Houmiel K."/>
            <person name="Imperial J."/>
            <person name="Kennedy C."/>
            <person name="Larson T.J."/>
            <person name="Latreille P."/>
            <person name="Ligon L.S."/>
            <person name="Lu J."/>
            <person name="Maerk M."/>
            <person name="Miller N.M."/>
            <person name="Norton S."/>
            <person name="O'Carroll I.P."/>
            <person name="Paulsen I."/>
            <person name="Raulfs E.C."/>
            <person name="Roemer R."/>
            <person name="Rosser J."/>
            <person name="Segura D."/>
            <person name="Slater S."/>
            <person name="Stricklin S.L."/>
            <person name="Studholme D.J."/>
            <person name="Sun J."/>
            <person name="Viana C.J."/>
            <person name="Wallin E."/>
            <person name="Wang B."/>
            <person name="Wheeler C."/>
            <person name="Zhu H."/>
            <person name="Dean D.R."/>
            <person name="Dixon R."/>
            <person name="Wood D."/>
        </authorList>
    </citation>
    <scope>NUCLEOTIDE SEQUENCE [LARGE SCALE GENOMIC DNA]</scope>
    <source>
        <strain>DJ / ATCC BAA-1303</strain>
    </source>
</reference>
<protein>
    <recommendedName>
        <fullName evidence="1">UPF0312 protein Avin_03250</fullName>
    </recommendedName>
</protein>
<organism>
    <name type="scientific">Azotobacter vinelandii (strain DJ / ATCC BAA-1303)</name>
    <dbReference type="NCBI Taxonomy" id="322710"/>
    <lineage>
        <taxon>Bacteria</taxon>
        <taxon>Pseudomonadati</taxon>
        <taxon>Pseudomonadota</taxon>
        <taxon>Gammaproteobacteria</taxon>
        <taxon>Pseudomonadales</taxon>
        <taxon>Pseudomonadaceae</taxon>
        <taxon>Azotobacter</taxon>
    </lineage>
</organism>
<comment type="subcellular location">
    <subcellularLocation>
        <location evidence="1">Periplasm</location>
    </subcellularLocation>
</comment>
<comment type="similarity">
    <text evidence="1">Belongs to the UPF0312 family. Type 1 subfamily.</text>
</comment>
<sequence>MLKKTLAALALGSALLGAGQAMAADYVIDKEGQHAFVNFKISHLGYSWLYGTFRDFDGSFSFDAAKPEASKVKVNLKTASVDSNHAERDKHIRSADFLNVAKHPTATFESTGVKSTGQDTFDITGNLSLNGVTKPVVIAARFIGEGKDPWGGYRAGFEGGTKLKLKDFGIQKDLGPASQEVDLIISVEGVRQ</sequence>
<feature type="signal peptide" evidence="1">
    <location>
        <begin position="1"/>
        <end position="23"/>
    </location>
</feature>
<feature type="chain" id="PRO_1000212921" description="UPF0312 protein Avin_03250">
    <location>
        <begin position="24"/>
        <end position="192"/>
    </location>
</feature>
<proteinExistence type="inferred from homology"/>
<keyword id="KW-0574">Periplasm</keyword>
<keyword id="KW-0732">Signal</keyword>
<name>Y325_AZOVD</name>
<dbReference type="EMBL" id="CP001157">
    <property type="protein sequence ID" value="ACO76585.1"/>
    <property type="molecule type" value="Genomic_DNA"/>
</dbReference>
<dbReference type="RefSeq" id="WP_012699013.1">
    <property type="nucleotide sequence ID" value="NC_012560.1"/>
</dbReference>
<dbReference type="SMR" id="C1DI88"/>
<dbReference type="STRING" id="322710.Avin_03250"/>
<dbReference type="EnsemblBacteria" id="ACO76585">
    <property type="protein sequence ID" value="ACO76585"/>
    <property type="gene ID" value="Avin_03250"/>
</dbReference>
<dbReference type="GeneID" id="88183777"/>
<dbReference type="KEGG" id="avn:Avin_03250"/>
<dbReference type="eggNOG" id="COG2353">
    <property type="taxonomic scope" value="Bacteria"/>
</dbReference>
<dbReference type="HOGENOM" id="CLU_071003_1_2_6"/>
<dbReference type="OrthoDB" id="9811006at2"/>
<dbReference type="Proteomes" id="UP000002424">
    <property type="component" value="Chromosome"/>
</dbReference>
<dbReference type="GO" id="GO:0042597">
    <property type="term" value="C:periplasmic space"/>
    <property type="evidence" value="ECO:0007669"/>
    <property type="project" value="UniProtKB-SubCell"/>
</dbReference>
<dbReference type="Gene3D" id="2.40.128.110">
    <property type="entry name" value="Lipid/polyisoprenoid-binding, YceI-like"/>
    <property type="match status" value="1"/>
</dbReference>
<dbReference type="HAMAP" id="MF_00780">
    <property type="entry name" value="UPF0312"/>
    <property type="match status" value="1"/>
</dbReference>
<dbReference type="InterPro" id="IPR007372">
    <property type="entry name" value="Lipid/polyisoprenoid-bd_YceI"/>
</dbReference>
<dbReference type="InterPro" id="IPR036761">
    <property type="entry name" value="TTHA0802/YceI-like_sf"/>
</dbReference>
<dbReference type="InterPro" id="IPR023480">
    <property type="entry name" value="UPF0312/YceI"/>
</dbReference>
<dbReference type="NCBIfam" id="NF002994">
    <property type="entry name" value="PRK03757.1"/>
    <property type="match status" value="1"/>
</dbReference>
<dbReference type="PANTHER" id="PTHR34406">
    <property type="entry name" value="PROTEIN YCEI"/>
    <property type="match status" value="1"/>
</dbReference>
<dbReference type="PANTHER" id="PTHR34406:SF1">
    <property type="entry name" value="PROTEIN YCEI"/>
    <property type="match status" value="1"/>
</dbReference>
<dbReference type="Pfam" id="PF04264">
    <property type="entry name" value="YceI"/>
    <property type="match status" value="1"/>
</dbReference>
<dbReference type="SMART" id="SM00867">
    <property type="entry name" value="YceI"/>
    <property type="match status" value="1"/>
</dbReference>
<dbReference type="SUPFAM" id="SSF101874">
    <property type="entry name" value="YceI-like"/>
    <property type="match status" value="1"/>
</dbReference>
<gene>
    <name type="ordered locus">Avin_03250</name>
</gene>
<accession>C1DI88</accession>